<dbReference type="EMBL" id="CP000887">
    <property type="protein sequence ID" value="ACD72608.1"/>
    <property type="molecule type" value="Genomic_DNA"/>
</dbReference>
<dbReference type="RefSeq" id="WP_002964289.1">
    <property type="nucleotide sequence ID" value="NC_010742.1"/>
</dbReference>
<dbReference type="SMR" id="B2S611"/>
<dbReference type="GeneID" id="97533588"/>
<dbReference type="KEGG" id="bmc:BAbS19_I11010"/>
<dbReference type="HOGENOM" id="CLU_040318_2_1_5"/>
<dbReference type="Proteomes" id="UP000002565">
    <property type="component" value="Chromosome 1"/>
</dbReference>
<dbReference type="GO" id="GO:0022627">
    <property type="term" value="C:cytosolic small ribosomal subunit"/>
    <property type="evidence" value="ECO:0007669"/>
    <property type="project" value="TreeGrafter"/>
</dbReference>
<dbReference type="GO" id="GO:0003735">
    <property type="term" value="F:structural constituent of ribosome"/>
    <property type="evidence" value="ECO:0007669"/>
    <property type="project" value="InterPro"/>
</dbReference>
<dbReference type="GO" id="GO:0006412">
    <property type="term" value="P:translation"/>
    <property type="evidence" value="ECO:0007669"/>
    <property type="project" value="UniProtKB-UniRule"/>
</dbReference>
<dbReference type="CDD" id="cd01425">
    <property type="entry name" value="RPS2"/>
    <property type="match status" value="1"/>
</dbReference>
<dbReference type="FunFam" id="1.10.287.610:FF:000001">
    <property type="entry name" value="30S ribosomal protein S2"/>
    <property type="match status" value="1"/>
</dbReference>
<dbReference type="Gene3D" id="3.40.50.10490">
    <property type="entry name" value="Glucose-6-phosphate isomerase like protein, domain 1"/>
    <property type="match status" value="1"/>
</dbReference>
<dbReference type="Gene3D" id="1.10.287.610">
    <property type="entry name" value="Helix hairpin bin"/>
    <property type="match status" value="1"/>
</dbReference>
<dbReference type="HAMAP" id="MF_00291_B">
    <property type="entry name" value="Ribosomal_uS2_B"/>
    <property type="match status" value="1"/>
</dbReference>
<dbReference type="InterPro" id="IPR001865">
    <property type="entry name" value="Ribosomal_uS2"/>
</dbReference>
<dbReference type="InterPro" id="IPR005706">
    <property type="entry name" value="Ribosomal_uS2_bac/mit/plastid"/>
</dbReference>
<dbReference type="InterPro" id="IPR018130">
    <property type="entry name" value="Ribosomal_uS2_CS"/>
</dbReference>
<dbReference type="InterPro" id="IPR023591">
    <property type="entry name" value="Ribosomal_uS2_flav_dom_sf"/>
</dbReference>
<dbReference type="NCBIfam" id="TIGR01011">
    <property type="entry name" value="rpsB_bact"/>
    <property type="match status" value="1"/>
</dbReference>
<dbReference type="PANTHER" id="PTHR12534">
    <property type="entry name" value="30S RIBOSOMAL PROTEIN S2 PROKARYOTIC AND ORGANELLAR"/>
    <property type="match status" value="1"/>
</dbReference>
<dbReference type="PANTHER" id="PTHR12534:SF0">
    <property type="entry name" value="SMALL RIBOSOMAL SUBUNIT PROTEIN US2M"/>
    <property type="match status" value="1"/>
</dbReference>
<dbReference type="Pfam" id="PF00318">
    <property type="entry name" value="Ribosomal_S2"/>
    <property type="match status" value="1"/>
</dbReference>
<dbReference type="PRINTS" id="PR00395">
    <property type="entry name" value="RIBOSOMALS2"/>
</dbReference>
<dbReference type="SUPFAM" id="SSF52313">
    <property type="entry name" value="Ribosomal protein S2"/>
    <property type="match status" value="1"/>
</dbReference>
<dbReference type="PROSITE" id="PS00962">
    <property type="entry name" value="RIBOSOMAL_S2_1"/>
    <property type="match status" value="1"/>
</dbReference>
<dbReference type="PROSITE" id="PS00963">
    <property type="entry name" value="RIBOSOMAL_S2_2"/>
    <property type="match status" value="1"/>
</dbReference>
<proteinExistence type="inferred from homology"/>
<keyword id="KW-0687">Ribonucleoprotein</keyword>
<keyword id="KW-0689">Ribosomal protein</keyword>
<protein>
    <recommendedName>
        <fullName evidence="1">Small ribosomal subunit protein uS2</fullName>
    </recommendedName>
    <alternativeName>
        <fullName evidence="2">30S ribosomal protein S2</fullName>
    </alternativeName>
</protein>
<name>RS2_BRUA1</name>
<organism>
    <name type="scientific">Brucella abortus (strain S19)</name>
    <dbReference type="NCBI Taxonomy" id="430066"/>
    <lineage>
        <taxon>Bacteria</taxon>
        <taxon>Pseudomonadati</taxon>
        <taxon>Pseudomonadota</taxon>
        <taxon>Alphaproteobacteria</taxon>
        <taxon>Hyphomicrobiales</taxon>
        <taxon>Brucellaceae</taxon>
        <taxon>Brucella/Ochrobactrum group</taxon>
        <taxon>Brucella</taxon>
    </lineage>
</organism>
<reference key="1">
    <citation type="journal article" date="2008" name="PLoS ONE">
        <title>Genome sequence of Brucella abortus vaccine strain S19 compared to virulent strains yields candidate virulence genes.</title>
        <authorList>
            <person name="Crasta O.R."/>
            <person name="Folkerts O."/>
            <person name="Fei Z."/>
            <person name="Mane S.P."/>
            <person name="Evans C."/>
            <person name="Martino-Catt S."/>
            <person name="Bricker B."/>
            <person name="Yu G."/>
            <person name="Du L."/>
            <person name="Sobral B.W."/>
        </authorList>
    </citation>
    <scope>NUCLEOTIDE SEQUENCE [LARGE SCALE GENOMIC DNA]</scope>
    <source>
        <strain>S19</strain>
    </source>
</reference>
<comment type="similarity">
    <text evidence="1">Belongs to the universal ribosomal protein uS2 family.</text>
</comment>
<feature type="chain" id="PRO_1000114996" description="Small ribosomal subunit protein uS2">
    <location>
        <begin position="1"/>
        <end position="256"/>
    </location>
</feature>
<accession>B2S611</accession>
<evidence type="ECO:0000255" key="1">
    <source>
        <dbReference type="HAMAP-Rule" id="MF_00291"/>
    </source>
</evidence>
<evidence type="ECO:0000305" key="2"/>
<sequence>MALPDFSMRQLLEAGVHFGHQTHRWNPKMAPFIYGERNNIHILDLSQTVPLLNSALKVVSDTVARGGRVLFVGTKRQASDIIADAANRSAQYYVNARWLGGMMTNWKTISNSIQRLRKLDELLAGEAQGFTKKERLNLEREREKLDRALGGIKDMGSVPDLMFIIDTNKEAIAIQEAKRLGIPVVAVIDSNCDPDQIDYPIPGNDDAARAIALYCDLIARAALDGIARQQGAMGIDVGAQVEAPVEPALQAPAEGA</sequence>
<gene>
    <name evidence="1" type="primary">rpsB</name>
    <name type="ordered locus">BAbS19_I11010</name>
</gene>